<dbReference type="EMBL" id="DQ445706">
    <property type="protein sequence ID" value="ABE02426.1"/>
    <property type="molecule type" value="Genomic_DNA"/>
</dbReference>
<dbReference type="SMR" id="Q1PG55"/>
<dbReference type="GO" id="GO:0005743">
    <property type="term" value="C:mitochondrial inner membrane"/>
    <property type="evidence" value="ECO:0007669"/>
    <property type="project" value="UniProtKB-SubCell"/>
</dbReference>
<dbReference type="GO" id="GO:0045275">
    <property type="term" value="C:respiratory chain complex III"/>
    <property type="evidence" value="ECO:0007669"/>
    <property type="project" value="InterPro"/>
</dbReference>
<dbReference type="GO" id="GO:0046872">
    <property type="term" value="F:metal ion binding"/>
    <property type="evidence" value="ECO:0007669"/>
    <property type="project" value="UniProtKB-KW"/>
</dbReference>
<dbReference type="GO" id="GO:0008121">
    <property type="term" value="F:ubiquinol-cytochrome-c reductase activity"/>
    <property type="evidence" value="ECO:0007669"/>
    <property type="project" value="InterPro"/>
</dbReference>
<dbReference type="GO" id="GO:0006122">
    <property type="term" value="P:mitochondrial electron transport, ubiquinol to cytochrome c"/>
    <property type="evidence" value="ECO:0007669"/>
    <property type="project" value="TreeGrafter"/>
</dbReference>
<dbReference type="CDD" id="cd00290">
    <property type="entry name" value="cytochrome_b_C"/>
    <property type="match status" value="1"/>
</dbReference>
<dbReference type="CDD" id="cd00284">
    <property type="entry name" value="Cytochrome_b_N"/>
    <property type="match status" value="1"/>
</dbReference>
<dbReference type="FunFam" id="1.20.810.10:FF:000002">
    <property type="entry name" value="Cytochrome b"/>
    <property type="match status" value="1"/>
</dbReference>
<dbReference type="Gene3D" id="1.20.810.10">
    <property type="entry name" value="Cytochrome Bc1 Complex, Chain C"/>
    <property type="match status" value="1"/>
</dbReference>
<dbReference type="InterPro" id="IPR005798">
    <property type="entry name" value="Cyt_b/b6_C"/>
</dbReference>
<dbReference type="InterPro" id="IPR036150">
    <property type="entry name" value="Cyt_b/b6_C_sf"/>
</dbReference>
<dbReference type="InterPro" id="IPR005797">
    <property type="entry name" value="Cyt_b/b6_N"/>
</dbReference>
<dbReference type="InterPro" id="IPR027387">
    <property type="entry name" value="Cytb/b6-like_sf"/>
</dbReference>
<dbReference type="InterPro" id="IPR030689">
    <property type="entry name" value="Cytochrome_b"/>
</dbReference>
<dbReference type="InterPro" id="IPR048260">
    <property type="entry name" value="Cytochrome_b_C_euk/bac"/>
</dbReference>
<dbReference type="InterPro" id="IPR048259">
    <property type="entry name" value="Cytochrome_b_N_euk/bac"/>
</dbReference>
<dbReference type="InterPro" id="IPR016174">
    <property type="entry name" value="Di-haem_cyt_TM"/>
</dbReference>
<dbReference type="PANTHER" id="PTHR19271">
    <property type="entry name" value="CYTOCHROME B"/>
    <property type="match status" value="1"/>
</dbReference>
<dbReference type="PANTHER" id="PTHR19271:SF16">
    <property type="entry name" value="CYTOCHROME B"/>
    <property type="match status" value="1"/>
</dbReference>
<dbReference type="Pfam" id="PF00032">
    <property type="entry name" value="Cytochrom_B_C"/>
    <property type="match status" value="1"/>
</dbReference>
<dbReference type="Pfam" id="PF00033">
    <property type="entry name" value="Cytochrome_B"/>
    <property type="match status" value="1"/>
</dbReference>
<dbReference type="PIRSF" id="PIRSF038885">
    <property type="entry name" value="COB"/>
    <property type="match status" value="1"/>
</dbReference>
<dbReference type="SUPFAM" id="SSF81648">
    <property type="entry name" value="a domain/subunit of cytochrome bc1 complex (Ubiquinol-cytochrome c reductase)"/>
    <property type="match status" value="1"/>
</dbReference>
<dbReference type="SUPFAM" id="SSF81342">
    <property type="entry name" value="Transmembrane di-heme cytochromes"/>
    <property type="match status" value="1"/>
</dbReference>
<dbReference type="PROSITE" id="PS51003">
    <property type="entry name" value="CYTB_CTER"/>
    <property type="match status" value="1"/>
</dbReference>
<dbReference type="PROSITE" id="PS51002">
    <property type="entry name" value="CYTB_NTER"/>
    <property type="match status" value="1"/>
</dbReference>
<protein>
    <recommendedName>
        <fullName>Cytochrome b</fullName>
    </recommendedName>
    <alternativeName>
        <fullName>Complex III subunit 3</fullName>
    </alternativeName>
    <alternativeName>
        <fullName>Complex III subunit III</fullName>
    </alternativeName>
    <alternativeName>
        <fullName>Cytochrome b-c1 complex subunit 3</fullName>
    </alternativeName>
    <alternativeName>
        <fullName>Ubiquinol-cytochrome-c reductase complex cytochrome b subunit</fullName>
    </alternativeName>
</protein>
<gene>
    <name type="primary">MT-CYB</name>
    <name type="synonym">COB</name>
    <name type="synonym">CYTB</name>
    <name type="synonym">MTCYB</name>
</gene>
<accession>Q1PG55</accession>
<feature type="chain" id="PRO_0000254802" description="Cytochrome b">
    <location>
        <begin position="1"/>
        <end position="379"/>
    </location>
</feature>
<feature type="transmembrane region" description="Helical" evidence="2">
    <location>
        <begin position="33"/>
        <end position="53"/>
    </location>
</feature>
<feature type="transmembrane region" description="Helical" evidence="2">
    <location>
        <begin position="77"/>
        <end position="98"/>
    </location>
</feature>
<feature type="transmembrane region" description="Helical" evidence="2">
    <location>
        <begin position="113"/>
        <end position="133"/>
    </location>
</feature>
<feature type="transmembrane region" description="Helical" evidence="2">
    <location>
        <begin position="178"/>
        <end position="198"/>
    </location>
</feature>
<feature type="transmembrane region" description="Helical" evidence="2">
    <location>
        <begin position="226"/>
        <end position="246"/>
    </location>
</feature>
<feature type="transmembrane region" description="Helical" evidence="2">
    <location>
        <begin position="288"/>
        <end position="308"/>
    </location>
</feature>
<feature type="transmembrane region" description="Helical" evidence="2">
    <location>
        <begin position="320"/>
        <end position="340"/>
    </location>
</feature>
<feature type="transmembrane region" description="Helical" evidence="2">
    <location>
        <begin position="347"/>
        <end position="367"/>
    </location>
</feature>
<feature type="binding site" description="axial binding residue" evidence="2">
    <location>
        <position position="83"/>
    </location>
    <ligand>
        <name>heme b</name>
        <dbReference type="ChEBI" id="CHEBI:60344"/>
        <label>b562</label>
    </ligand>
    <ligandPart>
        <name>Fe</name>
        <dbReference type="ChEBI" id="CHEBI:18248"/>
    </ligandPart>
</feature>
<feature type="binding site" description="axial binding residue" evidence="2">
    <location>
        <position position="97"/>
    </location>
    <ligand>
        <name>heme b</name>
        <dbReference type="ChEBI" id="CHEBI:60344"/>
        <label>b566</label>
    </ligand>
    <ligandPart>
        <name>Fe</name>
        <dbReference type="ChEBI" id="CHEBI:18248"/>
    </ligandPart>
</feature>
<feature type="binding site" description="axial binding residue" evidence="2">
    <location>
        <position position="182"/>
    </location>
    <ligand>
        <name>heme b</name>
        <dbReference type="ChEBI" id="CHEBI:60344"/>
        <label>b562</label>
    </ligand>
    <ligandPart>
        <name>Fe</name>
        <dbReference type="ChEBI" id="CHEBI:18248"/>
    </ligandPart>
</feature>
<feature type="binding site" description="axial binding residue" evidence="2">
    <location>
        <position position="196"/>
    </location>
    <ligand>
        <name>heme b</name>
        <dbReference type="ChEBI" id="CHEBI:60344"/>
        <label>b566</label>
    </ligand>
    <ligandPart>
        <name>Fe</name>
        <dbReference type="ChEBI" id="CHEBI:18248"/>
    </ligandPart>
</feature>
<feature type="binding site" evidence="2">
    <location>
        <position position="201"/>
    </location>
    <ligand>
        <name>a ubiquinone</name>
        <dbReference type="ChEBI" id="CHEBI:16389"/>
    </ligand>
</feature>
<proteinExistence type="inferred from homology"/>
<reference key="1">
    <citation type="submission" date="2006-03" db="EMBL/GenBank/DDBJ databases">
        <title>Phylogenetic relationships of the enigmatic harpy fruit bat, Harpyionycteris (Mammalia: Chiroptera: Pteropodidae).</title>
        <authorList>
            <person name="Giannini N.P."/>
            <person name="Almeida F.C."/>
            <person name="DeSalle R."/>
            <person name="Simmons N.B."/>
        </authorList>
    </citation>
    <scope>NUCLEOTIDE SEQUENCE [GENOMIC DNA]</scope>
    <source>
        <strain>Isolate 6</strain>
    </source>
</reference>
<name>CYB_EPOWA</name>
<sequence>MTNIRKSHPLLKIINDSLIDLPAPSNISSWWNFGSLLGICLGIQILTGLFLAMHYTSDTATAFQSVTHICRDVNYGWILRYLHANGASMFFICLFLHVGRGLYYGSYIFMETWNVGILLLFAVMATAFMGYVLPWGQMSFWGATVITNLLSAIPYIGTSLVEWIWGGFSVDKATLTRFFAFHFLLPFIIAALVMVHLLFLHETGSNNPTGIPSDMDMIPFHPYYTIKDMLGALAMILALLALVLFSPDLLGDPDNYIPANPLNTPPHIKPEWYFLFAYAILRSIPNKLGGVLALVLSILILILMPLLHTSKQRSMMFRPLSQCLFWLLVADLLTLTWIGGQPVEHPFIIIGQLASILYFSLILILMPFVSIMENHLLKW</sequence>
<geneLocation type="mitochondrion"/>
<keyword id="KW-0249">Electron transport</keyword>
<keyword id="KW-0349">Heme</keyword>
<keyword id="KW-0408">Iron</keyword>
<keyword id="KW-0472">Membrane</keyword>
<keyword id="KW-0479">Metal-binding</keyword>
<keyword id="KW-0496">Mitochondrion</keyword>
<keyword id="KW-0999">Mitochondrion inner membrane</keyword>
<keyword id="KW-0679">Respiratory chain</keyword>
<keyword id="KW-0812">Transmembrane</keyword>
<keyword id="KW-1133">Transmembrane helix</keyword>
<keyword id="KW-0813">Transport</keyword>
<keyword id="KW-0830">Ubiquinone</keyword>
<organism>
    <name type="scientific">Epomophorus wahlbergi</name>
    <name type="common">Wahlberg's epauletted fruit bat</name>
    <name type="synonym">Pteropus wahlbergi</name>
    <dbReference type="NCBI Taxonomy" id="58067"/>
    <lineage>
        <taxon>Eukaryota</taxon>
        <taxon>Metazoa</taxon>
        <taxon>Chordata</taxon>
        <taxon>Craniata</taxon>
        <taxon>Vertebrata</taxon>
        <taxon>Euteleostomi</taxon>
        <taxon>Mammalia</taxon>
        <taxon>Eutheria</taxon>
        <taxon>Laurasiatheria</taxon>
        <taxon>Chiroptera</taxon>
        <taxon>Yinpterochiroptera</taxon>
        <taxon>Pteropodoidea</taxon>
        <taxon>Pteropodidae</taxon>
        <taxon>Epomophorinae</taxon>
        <taxon>Epomophorini</taxon>
        <taxon>Epomophorus</taxon>
    </lineage>
</organism>
<comment type="function">
    <text evidence="2">Component of the ubiquinol-cytochrome c reductase complex (complex III or cytochrome b-c1 complex) that is part of the mitochondrial respiratory chain. The b-c1 complex mediates electron transfer from ubiquinol to cytochrome c. Contributes to the generation of a proton gradient across the mitochondrial membrane that is then used for ATP synthesis.</text>
</comment>
<comment type="cofactor">
    <cofactor evidence="2">
        <name>heme b</name>
        <dbReference type="ChEBI" id="CHEBI:60344"/>
    </cofactor>
    <text evidence="2">Binds 2 heme b groups non-covalently.</text>
</comment>
<comment type="subunit">
    <text evidence="2">The cytochrome bc1 complex contains 11 subunits: 3 respiratory subunits (MT-CYB, CYC1 and UQCRFS1), 2 core proteins (UQCRC1 and UQCRC2) and 6 low-molecular weight proteins (UQCRH/QCR6, UQCRB/QCR7, UQCRQ/QCR8, UQCR10/QCR9, UQCR11/QCR10 and a cleavage product of UQCRFS1). This cytochrome bc1 complex then forms a dimer.</text>
</comment>
<comment type="subcellular location">
    <subcellularLocation>
        <location evidence="2">Mitochondrion inner membrane</location>
        <topology evidence="2">Multi-pass membrane protein</topology>
    </subcellularLocation>
</comment>
<comment type="miscellaneous">
    <text evidence="1">Heme 1 (or BL or b562) is low-potential and absorbs at about 562 nm, and heme 2 (or BH or b566) is high-potential and absorbs at about 566 nm.</text>
</comment>
<comment type="similarity">
    <text evidence="3 4">Belongs to the cytochrome b family.</text>
</comment>
<comment type="caution">
    <text evidence="2">The full-length protein contains only eight transmembrane helices, not nine as predicted by bioinformatics tools.</text>
</comment>
<evidence type="ECO:0000250" key="1"/>
<evidence type="ECO:0000250" key="2">
    <source>
        <dbReference type="UniProtKB" id="P00157"/>
    </source>
</evidence>
<evidence type="ECO:0000255" key="3">
    <source>
        <dbReference type="PROSITE-ProRule" id="PRU00967"/>
    </source>
</evidence>
<evidence type="ECO:0000255" key="4">
    <source>
        <dbReference type="PROSITE-ProRule" id="PRU00968"/>
    </source>
</evidence>